<protein>
    <recommendedName>
        <fullName evidence="1">ATP synthase subunit beta</fullName>
        <ecNumber evidence="1">7.1.2.2</ecNumber>
    </recommendedName>
    <alternativeName>
        <fullName evidence="1">ATP synthase F1 sector subunit beta</fullName>
    </alternativeName>
    <alternativeName>
        <fullName evidence="1">F-ATPase subunit beta</fullName>
    </alternativeName>
</protein>
<organism>
    <name type="scientific">Escherichia coli O6:K15:H31 (strain 536 / UPEC)</name>
    <dbReference type="NCBI Taxonomy" id="362663"/>
    <lineage>
        <taxon>Bacteria</taxon>
        <taxon>Pseudomonadati</taxon>
        <taxon>Pseudomonadota</taxon>
        <taxon>Gammaproteobacteria</taxon>
        <taxon>Enterobacterales</taxon>
        <taxon>Enterobacteriaceae</taxon>
        <taxon>Escherichia</taxon>
    </lineage>
</organism>
<reference key="1">
    <citation type="journal article" date="2006" name="Mol. Microbiol.">
        <title>Role of pathogenicity island-associated integrases in the genome plasticity of uropathogenic Escherichia coli strain 536.</title>
        <authorList>
            <person name="Hochhut B."/>
            <person name="Wilde C."/>
            <person name="Balling G."/>
            <person name="Middendorf B."/>
            <person name="Dobrindt U."/>
            <person name="Brzuszkiewicz E."/>
            <person name="Gottschalk G."/>
            <person name="Carniel E."/>
            <person name="Hacker J."/>
        </authorList>
    </citation>
    <scope>NUCLEOTIDE SEQUENCE [LARGE SCALE GENOMIC DNA]</scope>
    <source>
        <strain>536 / UPEC</strain>
    </source>
</reference>
<sequence length="460" mass="50325">MATGKIVQVIGAVVDVEFPQDAVPRVYDALEVQNGNERLVLEVQQQLGGGIVRTIAMGSSDGLRRGLDVKDLEHPIEVPVGKATLGRIMNVLGEPVDMKGEIGEEERWAIHRAAPSYEELSNSQELLETGIKVIDLMCPFAKGGKVGLFGGAGVGKTVNMMELIRNIAIEHSGYSVFAGVGERTREGNDFYHEMTDSNVIDKVSLVYGQMNEPPGNRLRVALTGLTMAEKFRDEGRDVLLFVDNIYRYTLAGTEVSALLGRMPSAVGYQPTLAEEMGVLQERITSTKTGSITSVQAVYVPADDLTDPSPATTFAHLDATVVLSRQIASLGIYPAVDPLDSTSRQLDPLVVGQEHYDTARGVQSILQRYQELKDIIAILGMDELSEEDKLVVARARKIQRFLSQPFFVAEVFTGSPGKYVSLKDTIRGFKGIMEGEYDHLPEQAFYMVGSIEEAVEKAKKL</sequence>
<feature type="chain" id="PRO_0000254262" description="ATP synthase subunit beta">
    <location>
        <begin position="1"/>
        <end position="460"/>
    </location>
</feature>
<feature type="binding site" evidence="1">
    <location>
        <begin position="150"/>
        <end position="157"/>
    </location>
    <ligand>
        <name>ATP</name>
        <dbReference type="ChEBI" id="CHEBI:30616"/>
    </ligand>
</feature>
<keyword id="KW-0066">ATP synthesis</keyword>
<keyword id="KW-0067">ATP-binding</keyword>
<keyword id="KW-0997">Cell inner membrane</keyword>
<keyword id="KW-1003">Cell membrane</keyword>
<keyword id="KW-0139">CF(1)</keyword>
<keyword id="KW-0375">Hydrogen ion transport</keyword>
<keyword id="KW-0406">Ion transport</keyword>
<keyword id="KW-0472">Membrane</keyword>
<keyword id="KW-0547">Nucleotide-binding</keyword>
<keyword id="KW-1278">Translocase</keyword>
<keyword id="KW-0813">Transport</keyword>
<gene>
    <name evidence="1" type="primary">atpD</name>
    <name type="ordered locus">ECP_3931</name>
</gene>
<name>ATPB_ECOL5</name>
<dbReference type="EC" id="7.1.2.2" evidence="1"/>
<dbReference type="EMBL" id="CP000247">
    <property type="protein sequence ID" value="ABG71902.1"/>
    <property type="molecule type" value="Genomic_DNA"/>
</dbReference>
<dbReference type="RefSeq" id="WP_000190506.1">
    <property type="nucleotide sequence ID" value="NC_008253.1"/>
</dbReference>
<dbReference type="SMR" id="Q0TAX7"/>
<dbReference type="GeneID" id="93778235"/>
<dbReference type="KEGG" id="ecp:ECP_3931"/>
<dbReference type="HOGENOM" id="CLU_022398_0_2_6"/>
<dbReference type="Proteomes" id="UP000009182">
    <property type="component" value="Chromosome"/>
</dbReference>
<dbReference type="GO" id="GO:0005886">
    <property type="term" value="C:plasma membrane"/>
    <property type="evidence" value="ECO:0007669"/>
    <property type="project" value="UniProtKB-SubCell"/>
</dbReference>
<dbReference type="GO" id="GO:0045259">
    <property type="term" value="C:proton-transporting ATP synthase complex"/>
    <property type="evidence" value="ECO:0007669"/>
    <property type="project" value="UniProtKB-KW"/>
</dbReference>
<dbReference type="GO" id="GO:0005524">
    <property type="term" value="F:ATP binding"/>
    <property type="evidence" value="ECO:0007669"/>
    <property type="project" value="UniProtKB-UniRule"/>
</dbReference>
<dbReference type="GO" id="GO:0016887">
    <property type="term" value="F:ATP hydrolysis activity"/>
    <property type="evidence" value="ECO:0007669"/>
    <property type="project" value="InterPro"/>
</dbReference>
<dbReference type="GO" id="GO:0046933">
    <property type="term" value="F:proton-transporting ATP synthase activity, rotational mechanism"/>
    <property type="evidence" value="ECO:0007669"/>
    <property type="project" value="UniProtKB-UniRule"/>
</dbReference>
<dbReference type="CDD" id="cd18110">
    <property type="entry name" value="ATP-synt_F1_beta_C"/>
    <property type="match status" value="1"/>
</dbReference>
<dbReference type="CDD" id="cd18115">
    <property type="entry name" value="ATP-synt_F1_beta_N"/>
    <property type="match status" value="1"/>
</dbReference>
<dbReference type="CDD" id="cd01133">
    <property type="entry name" value="F1-ATPase_beta_CD"/>
    <property type="match status" value="1"/>
</dbReference>
<dbReference type="FunFam" id="1.10.1140.10:FF:000001">
    <property type="entry name" value="ATP synthase subunit beta"/>
    <property type="match status" value="1"/>
</dbReference>
<dbReference type="FunFam" id="2.40.10.170:FF:000003">
    <property type="entry name" value="ATP synthase subunit beta"/>
    <property type="match status" value="1"/>
</dbReference>
<dbReference type="FunFam" id="3.40.50.300:FF:000004">
    <property type="entry name" value="ATP synthase subunit beta"/>
    <property type="match status" value="1"/>
</dbReference>
<dbReference type="Gene3D" id="2.40.10.170">
    <property type="match status" value="1"/>
</dbReference>
<dbReference type="Gene3D" id="1.10.1140.10">
    <property type="entry name" value="Bovine Mitochondrial F1-atpase, Atp Synthase Beta Chain, Chain D, domain 3"/>
    <property type="match status" value="1"/>
</dbReference>
<dbReference type="Gene3D" id="3.40.50.300">
    <property type="entry name" value="P-loop containing nucleotide triphosphate hydrolases"/>
    <property type="match status" value="1"/>
</dbReference>
<dbReference type="HAMAP" id="MF_01347">
    <property type="entry name" value="ATP_synth_beta_bact"/>
    <property type="match status" value="1"/>
</dbReference>
<dbReference type="InterPro" id="IPR003593">
    <property type="entry name" value="AAA+_ATPase"/>
</dbReference>
<dbReference type="InterPro" id="IPR055190">
    <property type="entry name" value="ATP-synt_VA_C"/>
</dbReference>
<dbReference type="InterPro" id="IPR005722">
    <property type="entry name" value="ATP_synth_F1_bsu"/>
</dbReference>
<dbReference type="InterPro" id="IPR020003">
    <property type="entry name" value="ATPase_a/bsu_AS"/>
</dbReference>
<dbReference type="InterPro" id="IPR050053">
    <property type="entry name" value="ATPase_alpha/beta_chains"/>
</dbReference>
<dbReference type="InterPro" id="IPR004100">
    <property type="entry name" value="ATPase_F1/V1/A1_a/bsu_N"/>
</dbReference>
<dbReference type="InterPro" id="IPR036121">
    <property type="entry name" value="ATPase_F1/V1/A1_a/bsu_N_sf"/>
</dbReference>
<dbReference type="InterPro" id="IPR000194">
    <property type="entry name" value="ATPase_F1/V1/A1_a/bsu_nucl-bd"/>
</dbReference>
<dbReference type="InterPro" id="IPR024034">
    <property type="entry name" value="ATPase_F1/V1_b/a_C"/>
</dbReference>
<dbReference type="InterPro" id="IPR027417">
    <property type="entry name" value="P-loop_NTPase"/>
</dbReference>
<dbReference type="NCBIfam" id="TIGR01039">
    <property type="entry name" value="atpD"/>
    <property type="match status" value="1"/>
</dbReference>
<dbReference type="PANTHER" id="PTHR15184">
    <property type="entry name" value="ATP SYNTHASE"/>
    <property type="match status" value="1"/>
</dbReference>
<dbReference type="PANTHER" id="PTHR15184:SF71">
    <property type="entry name" value="ATP SYNTHASE SUBUNIT BETA, MITOCHONDRIAL"/>
    <property type="match status" value="1"/>
</dbReference>
<dbReference type="Pfam" id="PF00006">
    <property type="entry name" value="ATP-synt_ab"/>
    <property type="match status" value="1"/>
</dbReference>
<dbReference type="Pfam" id="PF02874">
    <property type="entry name" value="ATP-synt_ab_N"/>
    <property type="match status" value="1"/>
</dbReference>
<dbReference type="Pfam" id="PF22919">
    <property type="entry name" value="ATP-synt_VA_C"/>
    <property type="match status" value="1"/>
</dbReference>
<dbReference type="SMART" id="SM00382">
    <property type="entry name" value="AAA"/>
    <property type="match status" value="1"/>
</dbReference>
<dbReference type="SUPFAM" id="SSF47917">
    <property type="entry name" value="C-terminal domain of alpha and beta subunits of F1 ATP synthase"/>
    <property type="match status" value="1"/>
</dbReference>
<dbReference type="SUPFAM" id="SSF50615">
    <property type="entry name" value="N-terminal domain of alpha and beta subunits of F1 ATP synthase"/>
    <property type="match status" value="1"/>
</dbReference>
<dbReference type="SUPFAM" id="SSF52540">
    <property type="entry name" value="P-loop containing nucleoside triphosphate hydrolases"/>
    <property type="match status" value="1"/>
</dbReference>
<dbReference type="PROSITE" id="PS00152">
    <property type="entry name" value="ATPASE_ALPHA_BETA"/>
    <property type="match status" value="1"/>
</dbReference>
<comment type="function">
    <text evidence="1">Produces ATP from ADP in the presence of a proton gradient across the membrane. The catalytic sites are hosted primarily by the beta subunits.</text>
</comment>
<comment type="catalytic activity">
    <reaction evidence="1">
        <text>ATP + H2O + 4 H(+)(in) = ADP + phosphate + 5 H(+)(out)</text>
        <dbReference type="Rhea" id="RHEA:57720"/>
        <dbReference type="ChEBI" id="CHEBI:15377"/>
        <dbReference type="ChEBI" id="CHEBI:15378"/>
        <dbReference type="ChEBI" id="CHEBI:30616"/>
        <dbReference type="ChEBI" id="CHEBI:43474"/>
        <dbReference type="ChEBI" id="CHEBI:456216"/>
        <dbReference type="EC" id="7.1.2.2"/>
    </reaction>
</comment>
<comment type="subunit">
    <text evidence="1">F-type ATPases have 2 components, CF(1) - the catalytic core - and CF(0) - the membrane proton channel. CF(1) has five subunits: alpha(3), beta(3), gamma(1), delta(1), epsilon(1). CF(0) has three main subunits: a(1), b(2) and c(9-12). The alpha and beta chains form an alternating ring which encloses part of the gamma chain. CF(1) is attached to CF(0) by a central stalk formed by the gamma and epsilon chains, while a peripheral stalk is formed by the delta and b chains.</text>
</comment>
<comment type="subcellular location">
    <subcellularLocation>
        <location evidence="1">Cell inner membrane</location>
        <topology evidence="1">Peripheral membrane protein</topology>
    </subcellularLocation>
</comment>
<comment type="similarity">
    <text evidence="1">Belongs to the ATPase alpha/beta chains family.</text>
</comment>
<proteinExistence type="inferred from homology"/>
<accession>Q0TAX7</accession>
<evidence type="ECO:0000255" key="1">
    <source>
        <dbReference type="HAMAP-Rule" id="MF_01347"/>
    </source>
</evidence>